<comment type="function">
    <text evidence="3 4 7 9 10 12">Cyclin subunit of the CTDK-I complex, which hyperphosphorylates the C-terminal heptapeptide repeat domain (CTD) of the largest RNA polymerase II subunit. CTDK-I phosphorylates 'Ser-5' if the CTD substrate is not phosphorylated at 'Ser-5', but will phosphorylate 'Ser-2' of a CTD substrate if 'Ser-5' is already phosphorylated. CTDK-I is also more reactive toward substrates that are prephosphorylated at 'Ser-2' or 'Ser-5' compared with an unphosphorylated CTD substrate, therefore efficiently creating doubly phosphorylated CTD repeats. Involved in RNA polymerase II transcriptional elongation, and as part of the CTDK-I complex, pre-mRNA 3'-end processing and SET2 mediated H3K36 methylation. Together with CTK3, required for CTK1 CTD kinase activation. Required for DNA damage induced transcription. Involved in the adaptation to alternative carbon sources, including galactose, glycerol and ethanol, but not raffinose. Required for the integrity of the rDNA locus.</text>
</comment>
<comment type="subunit">
    <text evidence="2 11">CTDK-I consists of three subunits, CTK1, CTK2 and CTK3 (also called alpha, beta and gamma). Interacts with CTK1. Heterodimerization with CTK3 is required to protect this subunit from degradation.</text>
</comment>
<comment type="interaction">
    <interactant intactId="EBI-5236">
        <id>P46962</id>
    </interactant>
    <interactant intactId="EBI-5230">
        <id>Q03957</id>
        <label>CTK1</label>
    </interactant>
    <organismsDiffer>false</organismsDiffer>
    <experiments>10</experiments>
</comment>
<comment type="interaction">
    <interactant intactId="EBI-5236">
        <id>P46962</id>
    </interactant>
    <interactant intactId="EBI-5241">
        <id>P46963</id>
        <label>CTK3</label>
    </interactant>
    <organismsDiffer>false</organismsDiffer>
    <experiments>11</experiments>
</comment>
<comment type="subcellular location">
    <subcellularLocation>
        <location evidence="5 8">Nucleus</location>
        <location evidence="5 8">Nucleolus</location>
    </subcellularLocation>
</comment>
<comment type="PTM">
    <text evidence="1">Phosphorylated. Ubiquitinated. Phosphorylation and ubiquitination lead to degradation in growth-related way by the ubiquitin-proteasome pathway. Neither phosphorylation nor degradation requires association with CTK1.</text>
</comment>
<comment type="disruption phenotype">
    <text evidence="4 11">Null mutants are viable, but grow more slowly than wild-type cells at 30 degrees Celsius. They are cold-sensitive, failing to grow at 12 degrees Celsius. They display flocculent growth in liquid media and they show abnormal cell morphologies, for example, a significant fraction of the cells are greatly enlarged. Deletion mutant is sensitive to the DNA synthesis inhibitor hydroxyurea (HU) and UV irradiation.</text>
</comment>
<comment type="miscellaneous">
    <text evidence="6">Present with 1590 molecules/cell in log phase SD medium.</text>
</comment>
<comment type="similarity">
    <text evidence="13">Belongs to the cyclin family.</text>
</comment>
<organism>
    <name type="scientific">Saccharomyces cerevisiae (strain ATCC 204508 / S288c)</name>
    <name type="common">Baker's yeast</name>
    <dbReference type="NCBI Taxonomy" id="559292"/>
    <lineage>
        <taxon>Eukaryota</taxon>
        <taxon>Fungi</taxon>
        <taxon>Dikarya</taxon>
        <taxon>Ascomycota</taxon>
        <taxon>Saccharomycotina</taxon>
        <taxon>Saccharomycetes</taxon>
        <taxon>Saccharomycetales</taxon>
        <taxon>Saccharomycetaceae</taxon>
        <taxon>Saccharomyces</taxon>
    </lineage>
</organism>
<dbReference type="EMBL" id="U30295">
    <property type="protein sequence ID" value="AAC49077.1"/>
    <property type="molecule type" value="Genomic_DNA"/>
</dbReference>
<dbReference type="EMBL" id="Z49281">
    <property type="protein sequence ID" value="CAA89296.1"/>
    <property type="molecule type" value="Genomic_DNA"/>
</dbReference>
<dbReference type="EMBL" id="BK006943">
    <property type="protein sequence ID" value="DAA08785.1"/>
    <property type="molecule type" value="Genomic_DNA"/>
</dbReference>
<dbReference type="PIR" id="S56777">
    <property type="entry name" value="S56777"/>
</dbReference>
<dbReference type="RefSeq" id="NP_012528.1">
    <property type="nucleotide sequence ID" value="NM_001181440.1"/>
</dbReference>
<dbReference type="PDB" id="7JV7">
    <property type="method" value="X-ray"/>
    <property type="resolution" value="1.85 A"/>
    <property type="chains" value="B=1-323"/>
</dbReference>
<dbReference type="PDBsum" id="7JV7"/>
<dbReference type="SMR" id="P46962"/>
<dbReference type="BioGRID" id="33750">
    <property type="interactions" value="238"/>
</dbReference>
<dbReference type="ComplexPortal" id="CPX-1710">
    <property type="entry name" value="Carboxy-terminal domain protein kinase complex"/>
</dbReference>
<dbReference type="DIP" id="DIP-2105N"/>
<dbReference type="FunCoup" id="P46962">
    <property type="interactions" value="173"/>
</dbReference>
<dbReference type="IntAct" id="P46962">
    <property type="interactions" value="8"/>
</dbReference>
<dbReference type="MINT" id="P46962"/>
<dbReference type="STRING" id="4932.YJL006C"/>
<dbReference type="iPTMnet" id="P46962"/>
<dbReference type="PaxDb" id="4932-YJL006C"/>
<dbReference type="PeptideAtlas" id="P46962"/>
<dbReference type="EnsemblFungi" id="YJL006C_mRNA">
    <property type="protein sequence ID" value="YJL006C"/>
    <property type="gene ID" value="YJL006C"/>
</dbReference>
<dbReference type="GeneID" id="853450"/>
<dbReference type="KEGG" id="sce:YJL006C"/>
<dbReference type="AGR" id="SGD:S000003543"/>
<dbReference type="SGD" id="S000003543">
    <property type="gene designation" value="CTK2"/>
</dbReference>
<dbReference type="VEuPathDB" id="FungiDB:YJL006C"/>
<dbReference type="eggNOG" id="KOG0834">
    <property type="taxonomic scope" value="Eukaryota"/>
</dbReference>
<dbReference type="HOGENOM" id="CLU_842225_0_0_1"/>
<dbReference type="InParanoid" id="P46962"/>
<dbReference type="OMA" id="FMLGNKR"/>
<dbReference type="OrthoDB" id="4951845at2759"/>
<dbReference type="BioCyc" id="YEAST:G3O-31484-MONOMER"/>
<dbReference type="Reactome" id="R-SCE-674695">
    <property type="pathway name" value="RNA Polymerase II Pre-transcription Events"/>
</dbReference>
<dbReference type="Reactome" id="R-SCE-6796648">
    <property type="pathway name" value="TP53 Regulates Transcription of DNA Repair Genes"/>
</dbReference>
<dbReference type="Reactome" id="R-SCE-6807505">
    <property type="pathway name" value="RNA polymerase II transcribes snRNA genes"/>
</dbReference>
<dbReference type="Reactome" id="R-SCE-9018519">
    <property type="pathway name" value="Estrogen-dependent gene expression"/>
</dbReference>
<dbReference type="BioGRID-ORCS" id="853450">
    <property type="hits" value="0 hits in 10 CRISPR screens"/>
</dbReference>
<dbReference type="PRO" id="PR:P46962"/>
<dbReference type="Proteomes" id="UP000002311">
    <property type="component" value="Chromosome X"/>
</dbReference>
<dbReference type="RNAct" id="P46962">
    <property type="molecule type" value="protein"/>
</dbReference>
<dbReference type="GO" id="GO:0032806">
    <property type="term" value="C:carboxy-terminal domain protein kinase complex"/>
    <property type="evidence" value="ECO:0000353"/>
    <property type="project" value="ComplexPortal"/>
</dbReference>
<dbReference type="GO" id="GO:0070692">
    <property type="term" value="C:CTDK-1 complex"/>
    <property type="evidence" value="ECO:0000314"/>
    <property type="project" value="SGD"/>
</dbReference>
<dbReference type="GO" id="GO:0008024">
    <property type="term" value="C:cyclin/CDK positive transcription elongation factor complex"/>
    <property type="evidence" value="ECO:0000318"/>
    <property type="project" value="GO_Central"/>
</dbReference>
<dbReference type="GO" id="GO:0005829">
    <property type="term" value="C:cytosol"/>
    <property type="evidence" value="ECO:0000314"/>
    <property type="project" value="SGD"/>
</dbReference>
<dbReference type="GO" id="GO:0005730">
    <property type="term" value="C:nucleolus"/>
    <property type="evidence" value="ECO:0000314"/>
    <property type="project" value="SGD"/>
</dbReference>
<dbReference type="GO" id="GO:0005654">
    <property type="term" value="C:nucleoplasm"/>
    <property type="evidence" value="ECO:0000314"/>
    <property type="project" value="SGD"/>
</dbReference>
<dbReference type="GO" id="GO:0005634">
    <property type="term" value="C:nucleus"/>
    <property type="evidence" value="ECO:0000314"/>
    <property type="project" value="SGD"/>
</dbReference>
<dbReference type="GO" id="GO:0061575">
    <property type="term" value="F:cyclin-dependent protein serine/threonine kinase activator activity"/>
    <property type="evidence" value="ECO:0000318"/>
    <property type="project" value="GO_Central"/>
</dbReference>
<dbReference type="GO" id="GO:0016538">
    <property type="term" value="F:cyclin-dependent protein serine/threonine kinase regulator activity"/>
    <property type="evidence" value="ECO:0000314"/>
    <property type="project" value="SGD"/>
</dbReference>
<dbReference type="GO" id="GO:0006974">
    <property type="term" value="P:DNA damage response"/>
    <property type="evidence" value="ECO:0007669"/>
    <property type="project" value="UniProtKB-KW"/>
</dbReference>
<dbReference type="GO" id="GO:0031124">
    <property type="term" value="P:mRNA 3'-end processing"/>
    <property type="evidence" value="ECO:0000314"/>
    <property type="project" value="ComplexPortal"/>
</dbReference>
<dbReference type="GO" id="GO:0032786">
    <property type="term" value="P:positive regulation of DNA-templated transcription, elongation"/>
    <property type="evidence" value="ECO:0000314"/>
    <property type="project" value="SGD"/>
</dbReference>
<dbReference type="GO" id="GO:0045943">
    <property type="term" value="P:positive regulation of transcription by RNA polymerase I"/>
    <property type="evidence" value="ECO:0000314"/>
    <property type="project" value="ComplexPortal"/>
</dbReference>
<dbReference type="GO" id="GO:0045944">
    <property type="term" value="P:positive regulation of transcription by RNA polymerase II"/>
    <property type="evidence" value="ECO:0000318"/>
    <property type="project" value="GO_Central"/>
</dbReference>
<dbReference type="GO" id="GO:0045903">
    <property type="term" value="P:positive regulation of translational fidelity"/>
    <property type="evidence" value="ECO:0000353"/>
    <property type="project" value="SGD"/>
</dbReference>
<dbReference type="CDD" id="cd20547">
    <property type="entry name" value="CYCLIN_ScCTK2-like_rpt1"/>
    <property type="match status" value="1"/>
</dbReference>
<dbReference type="CDD" id="cd20546">
    <property type="entry name" value="CYCLIN_SpCG1C_ScCTK2-like_rpt2"/>
    <property type="match status" value="1"/>
</dbReference>
<dbReference type="FunFam" id="1.10.472.10:FF:000161">
    <property type="entry name" value="CTD kinase beta subunit"/>
    <property type="match status" value="1"/>
</dbReference>
<dbReference type="FunFam" id="1.10.472.10:FF:000169">
    <property type="entry name" value="CTD kinase subunit beta"/>
    <property type="match status" value="1"/>
</dbReference>
<dbReference type="Gene3D" id="1.10.472.10">
    <property type="entry name" value="Cyclin-like"/>
    <property type="match status" value="2"/>
</dbReference>
<dbReference type="InterPro" id="IPR013763">
    <property type="entry name" value="Cyclin-like_dom"/>
</dbReference>
<dbReference type="InterPro" id="IPR036915">
    <property type="entry name" value="Cyclin-like_sf"/>
</dbReference>
<dbReference type="InterPro" id="IPR043198">
    <property type="entry name" value="Cyclin/Ssn8"/>
</dbReference>
<dbReference type="InterPro" id="IPR006671">
    <property type="entry name" value="Cyclin_N"/>
</dbReference>
<dbReference type="PANTHER" id="PTHR10026">
    <property type="entry name" value="CYCLIN"/>
    <property type="match status" value="1"/>
</dbReference>
<dbReference type="Pfam" id="PF00134">
    <property type="entry name" value="Cyclin_N"/>
    <property type="match status" value="1"/>
</dbReference>
<dbReference type="SMART" id="SM00385">
    <property type="entry name" value="CYCLIN"/>
    <property type="match status" value="1"/>
</dbReference>
<dbReference type="SUPFAM" id="SSF47954">
    <property type="entry name" value="Cyclin-like"/>
    <property type="match status" value="2"/>
</dbReference>
<protein>
    <recommendedName>
        <fullName>CTD kinase subunit beta</fullName>
        <shortName>CTDK-I subunit beta</shortName>
    </recommendedName>
    <alternativeName>
        <fullName>CTD kinase 38 kDa subunit</fullName>
    </alternativeName>
    <alternativeName>
        <fullName>CTD kinase subunit 2</fullName>
    </alternativeName>
</protein>
<sequence length="323" mass="37905">MPSTFESQLFFSRPFLSKRQIQRAQKNTISDYRNYNQKKLAVFKFLSDLCVQLKFPRKTLETAVYFYQRYHLFNRFETEVCYTVATSCLTLGCKEVETIKKTNDICTLSLRLRNVVKINTDILENFKKRVFQIELRILESCSFDYRVNNYVHIDEYVIKIGRELSFDYKLCNLAWVIAYDALKLETILVIPQHSIALAILKIAYELLDNKNWSSKRYSLFETDEKSVNEAYFDIVNFYINSFDMCDLQRHLPADLLPIGVERFMELKKNAGPESGLPQIPDHLLNADPYITITRDNNVQERRYVLSLELINGESSINSSTRHA</sequence>
<proteinExistence type="evidence at protein level"/>
<reference key="1">
    <citation type="journal article" date="1995" name="Mol. Cell. Biol.">
        <title>The yeast carboxyl-terminal repeat domain kinase CTDK-I is a divergent cyclin-cyclin-dependent kinase complex.</title>
        <authorList>
            <person name="Sterner D.E."/>
            <person name="Lee J.M."/>
            <person name="Hardin S.E."/>
            <person name="Greenleaf A.L."/>
        </authorList>
    </citation>
    <scope>NUCLEOTIDE SEQUENCE [GENOMIC DNA]</scope>
    <scope>PROTEIN SEQUENCE OF 217-225</scope>
    <scope>CTD KINASE ACTIVITY</scope>
    <scope>SUBUNIT</scope>
    <scope>DISRUPTION PHENOTYPE</scope>
</reference>
<reference key="2">
    <citation type="journal article" date="1996" name="EMBO J.">
        <title>Complete nucleotide sequence of Saccharomyces cerevisiae chromosome X.</title>
        <authorList>
            <person name="Galibert F."/>
            <person name="Alexandraki D."/>
            <person name="Baur A."/>
            <person name="Boles E."/>
            <person name="Chalwatzis N."/>
            <person name="Chuat J.-C."/>
            <person name="Coster F."/>
            <person name="Cziepluch C."/>
            <person name="de Haan M."/>
            <person name="Domdey H."/>
            <person name="Durand P."/>
            <person name="Entian K.-D."/>
            <person name="Gatius M."/>
            <person name="Goffeau A."/>
            <person name="Grivell L.A."/>
            <person name="Hennemann A."/>
            <person name="Herbert C.J."/>
            <person name="Heumann K."/>
            <person name="Hilger F."/>
            <person name="Hollenberg C.P."/>
            <person name="Huang M.-E."/>
            <person name="Jacq C."/>
            <person name="Jauniaux J.-C."/>
            <person name="Katsoulou C."/>
            <person name="Kirchrath L."/>
            <person name="Kleine K."/>
            <person name="Kordes E."/>
            <person name="Koetter P."/>
            <person name="Liebl S."/>
            <person name="Louis E.J."/>
            <person name="Manus V."/>
            <person name="Mewes H.-W."/>
            <person name="Miosga T."/>
            <person name="Obermaier B."/>
            <person name="Perea J."/>
            <person name="Pohl T.M."/>
            <person name="Portetelle D."/>
            <person name="Pujol A."/>
            <person name="Purnelle B."/>
            <person name="Ramezani Rad M."/>
            <person name="Rasmussen S.W."/>
            <person name="Rose M."/>
            <person name="Rossau R."/>
            <person name="Schaaff-Gerstenschlaeger I."/>
            <person name="Smits P.H.M."/>
            <person name="Scarcez T."/>
            <person name="Soriano N."/>
            <person name="To Van D."/>
            <person name="Tzermia M."/>
            <person name="Van Broekhoven A."/>
            <person name="Vandenbol M."/>
            <person name="Wedler H."/>
            <person name="von Wettstein D."/>
            <person name="Wambutt R."/>
            <person name="Zagulski M."/>
            <person name="Zollner A."/>
            <person name="Karpfinger-Hartl L."/>
        </authorList>
    </citation>
    <scope>NUCLEOTIDE SEQUENCE [LARGE SCALE GENOMIC DNA]</scope>
    <source>
        <strain>ATCC 204508 / S288c</strain>
    </source>
</reference>
<reference key="3">
    <citation type="journal article" date="2014" name="G3 (Bethesda)">
        <title>The reference genome sequence of Saccharomyces cerevisiae: Then and now.</title>
        <authorList>
            <person name="Engel S.R."/>
            <person name="Dietrich F.S."/>
            <person name="Fisk D.G."/>
            <person name="Binkley G."/>
            <person name="Balakrishnan R."/>
            <person name="Costanzo M.C."/>
            <person name="Dwight S.S."/>
            <person name="Hitz B.C."/>
            <person name="Karra K."/>
            <person name="Nash R.S."/>
            <person name="Weng S."/>
            <person name="Wong E.D."/>
            <person name="Lloyd P."/>
            <person name="Skrzypek M.S."/>
            <person name="Miyasato S.R."/>
            <person name="Simison M."/>
            <person name="Cherry J.M."/>
        </authorList>
    </citation>
    <scope>GENOME REANNOTATION</scope>
    <source>
        <strain>ATCC 204508 / S288c</strain>
    </source>
</reference>
<reference key="4">
    <citation type="journal article" date="1997" name="J. Biol. Chem.">
        <title>Modulation of RNA polymerase II elongation efficiency by C-terminal heptapeptide repeat domain kinase I.</title>
        <authorList>
            <person name="Lee J.M."/>
            <person name="Greenleaf A.L."/>
        </authorList>
    </citation>
    <scope>FUNCTION IN RNA POLYMERASE II TRANSCRIPTION</scope>
</reference>
<reference key="5">
    <citation type="journal article" date="1999" name="Mol. Cell. Biol.">
        <title>The yeast C-type cyclin Ctk2p is phosphorylated and rapidly degraded by the ubiquitin-proteasome pathway.</title>
        <authorList>
            <person name="Hautbergue G."/>
            <person name="Goguel V."/>
        </authorList>
    </citation>
    <scope>PHOSPHORYLATION</scope>
    <scope>UBIQUITINATION</scope>
</reference>
<reference key="6">
    <citation type="journal article" date="2001" name="J. Biol. Chem.">
        <title>Activation of the cyclin-dependent kinase CTDK-I requires the heterodimerization of two unstable subunits.</title>
        <authorList>
            <person name="Hautbergue G."/>
            <person name="Goguel V."/>
        </authorList>
    </citation>
    <scope>CTK1 ACTIVATION</scope>
    <scope>INTERACTION WITH CTK1 AND CTK3</scope>
</reference>
<reference key="7">
    <citation type="journal article" date="2003" name="Eukaryot. Cell">
        <title>Budding yeast CTDK-I is required for DNA damage-induced transcription.</title>
        <authorList>
            <person name="Ostapenko D."/>
            <person name="Solomon M.J."/>
        </authorList>
    </citation>
    <scope>FUNCTION</scope>
    <scope>DISRUPTION PHENOTYPE</scope>
</reference>
<reference key="8">
    <citation type="journal article" date="2003" name="Genes Dev.">
        <title>Phosphorylation of RNA polymerase II CTD regulates H3 methylation in yeast.</title>
        <authorList>
            <person name="Xiao T."/>
            <person name="Hall H."/>
            <person name="Kizer K.O."/>
            <person name="Shibata Y."/>
            <person name="Hall M.C."/>
            <person name="Borchers C.H."/>
            <person name="Strahl B.D."/>
        </authorList>
    </citation>
    <scope>FUNCTION IN H3 METHYLATION</scope>
</reference>
<reference key="9">
    <citation type="journal article" date="2003" name="Nature">
        <title>Global analysis of protein localization in budding yeast.</title>
        <authorList>
            <person name="Huh W.-K."/>
            <person name="Falvo J.V."/>
            <person name="Gerke L.C."/>
            <person name="Carroll A.S."/>
            <person name="Howson R.W."/>
            <person name="Weissman J.S."/>
            <person name="O'Shea E.K."/>
        </authorList>
    </citation>
    <scope>SUBCELLULAR LOCATION [LARGE SCALE ANALYSIS]</scope>
</reference>
<reference key="10">
    <citation type="journal article" date="2003" name="Nature">
        <title>Global analysis of protein expression in yeast.</title>
        <authorList>
            <person name="Ghaemmaghami S."/>
            <person name="Huh W.-K."/>
            <person name="Bower K."/>
            <person name="Howson R.W."/>
            <person name="Belle A."/>
            <person name="Dephoure N."/>
            <person name="O'Shea E.K."/>
            <person name="Weissman J.S."/>
        </authorList>
    </citation>
    <scope>LEVEL OF PROTEIN EXPRESSION [LARGE SCALE ANALYSIS]</scope>
</reference>
<reference key="11">
    <citation type="journal article" date="2004" name="J. Biol. Chem.">
        <title>C-terminal repeat domain kinase I phosphorylates Ser2 and Ser5 of RNA polymerase II C-terminal domain repeats.</title>
        <authorList>
            <person name="Jones J.C."/>
            <person name="Phatnani H.P."/>
            <person name="Haystead T.A."/>
            <person name="MacDonald J.A."/>
            <person name="Alam S.M."/>
            <person name="Greenleaf A.L."/>
        </authorList>
    </citation>
    <scope>FUNCTION OF THE CTDK-I COMPLEX</scope>
</reference>
<reference key="12">
    <citation type="journal article" date="2004" name="Nucleic Acids Res.">
        <title>CTD kinase I is involved in RNA polymerase I transcription.</title>
        <authorList>
            <person name="Bouchoux C."/>
            <person name="Hautbergue G."/>
            <person name="Grenetier S."/>
            <person name="Carles C."/>
            <person name="Riva M."/>
            <person name="Goguel V."/>
        </authorList>
    </citation>
    <scope>SUBCELLULAR LOCATION</scope>
</reference>
<reference key="13">
    <citation type="journal article" date="2005" name="FEBS Lett.">
        <title>Glucose deprivation mediates interaction between CTDK-I and Snf1 in Saccharomyces cerevisiae.</title>
        <authorList>
            <person name="Van Driessche B."/>
            <person name="Coddens S."/>
            <person name="Van Mullem V."/>
            <person name="Vandenhaute J."/>
        </authorList>
    </citation>
    <scope>FUNCTION IN ADAPTATION TO ALTERNATIVE CARBON SOURCES</scope>
</reference>
<reference key="14">
    <citation type="journal article" date="2006" name="Nucleic Acids Res.">
        <title>CTD kinase I is required for the integrity of the rDNA tandem array.</title>
        <authorList>
            <person name="Grenetier S."/>
            <person name="Bouchoux C."/>
            <person name="Goguel V."/>
        </authorList>
    </citation>
    <scope>FUNCTION IN THE INTEGRITY OF RDNA</scope>
</reference>
<keyword id="KW-0002">3D-structure</keyword>
<keyword id="KW-0195">Cyclin</keyword>
<keyword id="KW-0903">Direct protein sequencing</keyword>
<keyword id="KW-0227">DNA damage</keyword>
<keyword id="KW-0507">mRNA processing</keyword>
<keyword id="KW-0539">Nucleus</keyword>
<keyword id="KW-0597">Phosphoprotein</keyword>
<keyword id="KW-1185">Reference proteome</keyword>
<keyword id="KW-0804">Transcription</keyword>
<keyword id="KW-0832">Ubl conjugation</keyword>
<evidence type="ECO:0000269" key="1">
    <source>
    </source>
</evidence>
<evidence type="ECO:0000269" key="2">
    <source>
    </source>
</evidence>
<evidence type="ECO:0000269" key="3">
    <source>
    </source>
</evidence>
<evidence type="ECO:0000269" key="4">
    <source>
    </source>
</evidence>
<evidence type="ECO:0000269" key="5">
    <source>
    </source>
</evidence>
<evidence type="ECO:0000269" key="6">
    <source>
    </source>
</evidence>
<evidence type="ECO:0000269" key="7">
    <source>
    </source>
</evidence>
<evidence type="ECO:0000269" key="8">
    <source>
    </source>
</evidence>
<evidence type="ECO:0000269" key="9">
    <source>
    </source>
</evidence>
<evidence type="ECO:0000269" key="10">
    <source>
    </source>
</evidence>
<evidence type="ECO:0000269" key="11">
    <source>
    </source>
</evidence>
<evidence type="ECO:0000269" key="12">
    <source>
    </source>
</evidence>
<evidence type="ECO:0000305" key="13"/>
<evidence type="ECO:0007829" key="14">
    <source>
        <dbReference type="PDB" id="7JV7"/>
    </source>
</evidence>
<name>CTK2_YEAST</name>
<feature type="chain" id="PRO_0000080507" description="CTD kinase subunit beta">
    <location>
        <begin position="1"/>
        <end position="323"/>
    </location>
</feature>
<feature type="strand" evidence="14">
    <location>
        <begin position="6"/>
        <end position="11"/>
    </location>
</feature>
<feature type="helix" evidence="14">
    <location>
        <begin position="18"/>
        <end position="25"/>
    </location>
</feature>
<feature type="turn" evidence="14">
    <location>
        <begin position="26"/>
        <end position="28"/>
    </location>
</feature>
<feature type="helix" evidence="14">
    <location>
        <begin position="32"/>
        <end position="53"/>
    </location>
</feature>
<feature type="helix" evidence="14">
    <location>
        <begin position="57"/>
        <end position="73"/>
    </location>
</feature>
<feature type="turn" evidence="14">
    <location>
        <begin position="78"/>
        <end position="80"/>
    </location>
</feature>
<feature type="helix" evidence="14">
    <location>
        <begin position="81"/>
        <end position="95"/>
    </location>
</feature>
<feature type="helix" evidence="14">
    <location>
        <begin position="102"/>
        <end position="113"/>
    </location>
</feature>
<feature type="helix" evidence="14">
    <location>
        <begin position="120"/>
        <end position="140"/>
    </location>
</feature>
<feature type="turn" evidence="14">
    <location>
        <begin position="141"/>
        <end position="143"/>
    </location>
</feature>
<feature type="helix" evidence="14">
    <location>
        <begin position="153"/>
        <end position="163"/>
    </location>
</feature>
<feature type="helix" evidence="14">
    <location>
        <begin position="168"/>
        <end position="181"/>
    </location>
</feature>
<feature type="helix" evidence="14">
    <location>
        <begin position="186"/>
        <end position="188"/>
    </location>
</feature>
<feature type="helix" evidence="14">
    <location>
        <begin position="192"/>
        <end position="206"/>
    </location>
</feature>
<feature type="helix" evidence="14">
    <location>
        <begin position="214"/>
        <end position="220"/>
    </location>
</feature>
<feature type="helix" evidence="14">
    <location>
        <begin position="224"/>
        <end position="240"/>
    </location>
</feature>
<feature type="helix" evidence="14">
    <location>
        <begin position="242"/>
        <end position="244"/>
    </location>
</feature>
<feature type="helix" evidence="14">
    <location>
        <begin position="247"/>
        <end position="249"/>
    </location>
</feature>
<feature type="helix" evidence="14">
    <location>
        <begin position="260"/>
        <end position="269"/>
    </location>
</feature>
<feature type="helix" evidence="14">
    <location>
        <begin position="281"/>
        <end position="285"/>
    </location>
</feature>
<feature type="helix" evidence="14">
    <location>
        <begin position="288"/>
        <end position="291"/>
    </location>
</feature>
<feature type="strand" evidence="14">
    <location>
        <begin position="299"/>
        <end position="305"/>
    </location>
</feature>
<feature type="helix" evidence="14">
    <location>
        <begin position="307"/>
        <end position="313"/>
    </location>
</feature>
<gene>
    <name type="primary">CTK2</name>
    <name type="ordered locus">YJL006C</name>
    <name type="ORF">J1390</name>
</gene>
<accession>P46962</accession>
<accession>D6VWG9</accession>